<protein>
    <recommendedName>
        <fullName>Adhesion G-protein coupled receptor G1</fullName>
    </recommendedName>
    <alternativeName>
        <fullName>G-protein coupled receptor 56</fullName>
    </alternativeName>
    <component>
        <recommendedName>
            <fullName>Adhesion G-protein coupled receptor G1, N-terminal fragment</fullName>
        </recommendedName>
        <alternativeName>
            <fullName>ADGRG1 N-terminal fragment</fullName>
            <shortName>ADGRG1 NT</shortName>
        </alternativeName>
        <alternativeName>
            <fullName>GPR56 N-terminal fragment</fullName>
            <shortName>GPR56 NT</shortName>
            <shortName>GPR56(N)</shortName>
        </alternativeName>
        <alternativeName>
            <fullName>GPR56 extracellular subunit</fullName>
        </alternativeName>
        <alternativeName>
            <fullName>GPR56 subunit alpha</fullName>
        </alternativeName>
    </component>
    <component>
        <recommendedName>
            <fullName>Adhesion G-protein coupled receptor G1, C-terminal fragment</fullName>
        </recommendedName>
        <alternativeName>
            <fullName>ADGRG1 C-terminal fragment</fullName>
            <shortName>ADGRG1 CT</shortName>
        </alternativeName>
        <alternativeName>
            <fullName>GPR56 C-terminal fragment</fullName>
            <shortName>GPR56 CT</shortName>
            <shortName>GPR56(C)</shortName>
        </alternativeName>
        <alternativeName>
            <fullName>GPR56 seven-transmembrane subunit</fullName>
            <shortName>GPR56 7TM</shortName>
        </alternativeName>
        <alternativeName>
            <fullName>GPR56 subunit beta</fullName>
        </alternativeName>
    </component>
</protein>
<sequence length="687" mass="76973">MTAQSLLQMTLFLLSLLFLVQGAHGRGHREDFRFCSQRNQTHKSSLHYKATQDLRISIENSEEALTVHAPFPAAHPASQSFPDPRGLYHFCLYWNRHAGRLHLLYGKHDFLLSDKASSLLCFQHQEESLAQGPPLLATSVTSWWSPQNISLPSAASFTFSFHSPSHTAAHNASVDMCELKRDLQLLSQFLKHPQKASRRPSAAPASQQLQSLESKLTSVRFMGDTVSFEEDRINATVWKLQPTAGLQDLHIHSRQEEEQSEILEYSVLLPRTLFQRTKGRRGEAEKRLLLVDFSSQALFQDKNASQVLGEKVLGIVVQNTKVANLTEPVVLTFQHQLQPKNVTLQCVFWVEDPTLSSPGHWSSAGCETVRRETQTSCFCNHLTYFAVLMVSSVEVDAVHKHYLSLLSYVGCVISALACVVTIAAYLCSRRKPRDYTIKVHMNLLLAVFLLDMSFLLSEPVALTGSEAGCRAGAIFLHFSLLACLSWMGLEGYNLYRLVVEVFGTYVPGYLLKLSAMGWGFPIFLVTLVALVDVDNYGPIILAVHRTPESVIYPSMCWIRDSLVSYVTNLGLFSLVFLFNMAMLGTMVVQILRLRPHTQKWSHVLTLLGLSLVLGLPWALIFFSFASGTFQLVVLYLFSIITSFQGFLIFIWYWSMRLQARGGPSPLKSNSDSARLPISSGSTSSSRI</sequence>
<gene>
    <name type="primary">ADGRG1</name>
    <name type="synonym">GPR56</name>
</gene>
<reference key="1">
    <citation type="submission" date="2004-12" db="EMBL/GenBank/DDBJ databases">
        <title>Detecting selection requires more than just human-chimpanzee-mouse trios.</title>
        <authorList>
            <person name="Piao X."/>
            <person name="Collura R.V."/>
            <person name="Lobell A."/>
            <person name="Bailey A.S."/>
            <person name="Walsh C.A."/>
            <person name="Ruvolo M."/>
        </authorList>
    </citation>
    <scope>NUCLEOTIDE SEQUENCE [GENOMIC DNA]</scope>
</reference>
<accession>Q50DM5</accession>
<keyword id="KW-0130">Cell adhesion</keyword>
<keyword id="KW-1003">Cell membrane</keyword>
<keyword id="KW-0217">Developmental protein</keyword>
<keyword id="KW-0221">Differentiation</keyword>
<keyword id="KW-1015">Disulfide bond</keyword>
<keyword id="KW-0297">G-protein coupled receptor</keyword>
<keyword id="KW-0325">Glycoprotein</keyword>
<keyword id="KW-0358">Heparin-binding</keyword>
<keyword id="KW-0472">Membrane</keyword>
<keyword id="KW-0524">Neurogenesis</keyword>
<keyword id="KW-0675">Receptor</keyword>
<keyword id="KW-0964">Secreted</keyword>
<keyword id="KW-0732">Signal</keyword>
<keyword id="KW-0807">Transducer</keyword>
<keyword id="KW-0812">Transmembrane</keyword>
<keyword id="KW-1133">Transmembrane helix</keyword>
<keyword id="KW-0832">Ubl conjugation</keyword>
<proteinExistence type="inferred from homology"/>
<evidence type="ECO:0000250" key="1">
    <source>
        <dbReference type="UniProtKB" id="Q8K209"/>
    </source>
</evidence>
<evidence type="ECO:0000250" key="2">
    <source>
        <dbReference type="UniProtKB" id="Q9Y653"/>
    </source>
</evidence>
<evidence type="ECO:0000255" key="3"/>
<evidence type="ECO:0000255" key="4">
    <source>
        <dbReference type="PROSITE-ProRule" id="PRU00098"/>
    </source>
</evidence>
<evidence type="ECO:0000256" key="5">
    <source>
        <dbReference type="SAM" id="MobiDB-lite"/>
    </source>
</evidence>
<evidence type="ECO:0000305" key="6"/>
<dbReference type="EMBL" id="AY845391">
    <property type="protein sequence ID" value="AAX56346.1"/>
    <property type="molecule type" value="Genomic_DNA"/>
</dbReference>
<dbReference type="EMBL" id="AY845379">
    <property type="protein sequence ID" value="AAX56346.1"/>
    <property type="status" value="JOINED"/>
    <property type="molecule type" value="Genomic_DNA"/>
</dbReference>
<dbReference type="EMBL" id="AY845380">
    <property type="protein sequence ID" value="AAX56346.1"/>
    <property type="status" value="JOINED"/>
    <property type="molecule type" value="Genomic_DNA"/>
</dbReference>
<dbReference type="EMBL" id="AY845381">
    <property type="protein sequence ID" value="AAX56346.1"/>
    <property type="status" value="JOINED"/>
    <property type="molecule type" value="Genomic_DNA"/>
</dbReference>
<dbReference type="EMBL" id="AY845382">
    <property type="protein sequence ID" value="AAX56346.1"/>
    <property type="status" value="JOINED"/>
    <property type="molecule type" value="Genomic_DNA"/>
</dbReference>
<dbReference type="EMBL" id="AY845383">
    <property type="protein sequence ID" value="AAX56346.1"/>
    <property type="status" value="JOINED"/>
    <property type="molecule type" value="Genomic_DNA"/>
</dbReference>
<dbReference type="EMBL" id="AY845384">
    <property type="protein sequence ID" value="AAX56346.1"/>
    <property type="status" value="JOINED"/>
    <property type="molecule type" value="Genomic_DNA"/>
</dbReference>
<dbReference type="EMBL" id="AY845385">
    <property type="protein sequence ID" value="AAX56346.1"/>
    <property type="status" value="JOINED"/>
    <property type="molecule type" value="Genomic_DNA"/>
</dbReference>
<dbReference type="EMBL" id="AY845386">
    <property type="protein sequence ID" value="AAX56346.1"/>
    <property type="status" value="JOINED"/>
    <property type="molecule type" value="Genomic_DNA"/>
</dbReference>
<dbReference type="EMBL" id="AY845387">
    <property type="protein sequence ID" value="AAX56346.1"/>
    <property type="status" value="JOINED"/>
    <property type="molecule type" value="Genomic_DNA"/>
</dbReference>
<dbReference type="EMBL" id="AY845388">
    <property type="protein sequence ID" value="AAX56346.1"/>
    <property type="status" value="JOINED"/>
    <property type="molecule type" value="Genomic_DNA"/>
</dbReference>
<dbReference type="EMBL" id="AY845389">
    <property type="protein sequence ID" value="AAX56346.1"/>
    <property type="status" value="JOINED"/>
    <property type="molecule type" value="Genomic_DNA"/>
</dbReference>
<dbReference type="EMBL" id="AY845390">
    <property type="protein sequence ID" value="AAX56346.1"/>
    <property type="status" value="JOINED"/>
    <property type="molecule type" value="Genomic_DNA"/>
</dbReference>
<dbReference type="SMR" id="Q50DM5"/>
<dbReference type="MEROPS" id="P02.008"/>
<dbReference type="GlyCosmos" id="Q50DM5">
    <property type="glycosylation" value="7 sites, No reported glycans"/>
</dbReference>
<dbReference type="GO" id="GO:0005576">
    <property type="term" value="C:extracellular region"/>
    <property type="evidence" value="ECO:0007669"/>
    <property type="project" value="UniProtKB-SubCell"/>
</dbReference>
<dbReference type="GO" id="GO:0097451">
    <property type="term" value="C:glial limiting end-foot"/>
    <property type="evidence" value="ECO:0000250"/>
    <property type="project" value="UniProtKB"/>
</dbReference>
<dbReference type="GO" id="GO:0045121">
    <property type="term" value="C:membrane raft"/>
    <property type="evidence" value="ECO:0007669"/>
    <property type="project" value="UniProtKB-SubCell"/>
</dbReference>
<dbReference type="GO" id="GO:0005886">
    <property type="term" value="C:plasma membrane"/>
    <property type="evidence" value="ECO:0007669"/>
    <property type="project" value="UniProtKB-SubCell"/>
</dbReference>
<dbReference type="GO" id="GO:0005518">
    <property type="term" value="F:collagen binding"/>
    <property type="evidence" value="ECO:0000250"/>
    <property type="project" value="UniProtKB"/>
</dbReference>
<dbReference type="GO" id="GO:0050840">
    <property type="term" value="F:extracellular matrix binding"/>
    <property type="evidence" value="ECO:0000250"/>
    <property type="project" value="UniProtKB"/>
</dbReference>
<dbReference type="GO" id="GO:0004930">
    <property type="term" value="F:G protein-coupled receptor activity"/>
    <property type="evidence" value="ECO:0000250"/>
    <property type="project" value="UniProtKB"/>
</dbReference>
<dbReference type="GO" id="GO:0008201">
    <property type="term" value="F:heparin binding"/>
    <property type="evidence" value="ECO:0000250"/>
    <property type="project" value="UniProtKB"/>
</dbReference>
<dbReference type="GO" id="GO:0007189">
    <property type="term" value="P:adenylate cyclase-activating G protein-coupled receptor signaling pathway"/>
    <property type="evidence" value="ECO:0007669"/>
    <property type="project" value="TreeGrafter"/>
</dbReference>
<dbReference type="GO" id="GO:0001525">
    <property type="term" value="P:angiogenesis"/>
    <property type="evidence" value="ECO:0000250"/>
    <property type="project" value="UniProtKB"/>
</dbReference>
<dbReference type="GO" id="GO:0007155">
    <property type="term" value="P:cell adhesion"/>
    <property type="evidence" value="ECO:0000250"/>
    <property type="project" value="UniProtKB"/>
</dbReference>
<dbReference type="GO" id="GO:0016477">
    <property type="term" value="P:cell migration"/>
    <property type="evidence" value="ECO:0000250"/>
    <property type="project" value="UniProtKB"/>
</dbReference>
<dbReference type="GO" id="GO:0007166">
    <property type="term" value="P:cell surface receptor signaling pathway"/>
    <property type="evidence" value="ECO:0007669"/>
    <property type="project" value="InterPro"/>
</dbReference>
<dbReference type="GO" id="GO:0021801">
    <property type="term" value="P:cerebral cortex radial glia-guided migration"/>
    <property type="evidence" value="ECO:0000250"/>
    <property type="project" value="UniProtKB"/>
</dbReference>
<dbReference type="GO" id="GO:0021819">
    <property type="term" value="P:layer formation in cerebral cortex"/>
    <property type="evidence" value="ECO:0000250"/>
    <property type="project" value="UniProtKB"/>
</dbReference>
<dbReference type="GO" id="GO:0008285">
    <property type="term" value="P:negative regulation of cell population proliferation"/>
    <property type="evidence" value="ECO:0000250"/>
    <property type="project" value="UniProtKB"/>
</dbReference>
<dbReference type="GO" id="GO:0110076">
    <property type="term" value="P:negative regulation of ferroptosis"/>
    <property type="evidence" value="ECO:0000250"/>
    <property type="project" value="UniProtKB"/>
</dbReference>
<dbReference type="GO" id="GO:2001223">
    <property type="term" value="P:negative regulation of neuron migration"/>
    <property type="evidence" value="ECO:0000250"/>
    <property type="project" value="UniProtKB"/>
</dbReference>
<dbReference type="GO" id="GO:0070444">
    <property type="term" value="P:oligodendrocyte progenitor proliferation"/>
    <property type="evidence" value="ECO:0000250"/>
    <property type="project" value="UniProtKB"/>
</dbReference>
<dbReference type="GO" id="GO:0007200">
    <property type="term" value="P:phospholipase C-activating G protein-coupled receptor signaling pathway"/>
    <property type="evidence" value="ECO:0000250"/>
    <property type="project" value="UniProtKB"/>
</dbReference>
<dbReference type="GO" id="GO:0045785">
    <property type="term" value="P:positive regulation of cell adhesion"/>
    <property type="evidence" value="ECO:0000250"/>
    <property type="project" value="UniProtKB"/>
</dbReference>
<dbReference type="GO" id="GO:0035025">
    <property type="term" value="P:positive regulation of Rho protein signal transduction"/>
    <property type="evidence" value="ECO:0000250"/>
    <property type="project" value="UniProtKB"/>
</dbReference>
<dbReference type="GO" id="GO:1900748">
    <property type="term" value="P:positive regulation of vascular endothelial growth factor signaling pathway"/>
    <property type="evidence" value="ECO:0000250"/>
    <property type="project" value="UniProtKB"/>
</dbReference>
<dbReference type="GO" id="GO:1905806">
    <property type="term" value="P:regulation of synapse pruning"/>
    <property type="evidence" value="ECO:0000250"/>
    <property type="project" value="UniProtKB"/>
</dbReference>
<dbReference type="GO" id="GO:0007266">
    <property type="term" value="P:Rho protein signal transduction"/>
    <property type="evidence" value="ECO:0000250"/>
    <property type="project" value="UniProtKB"/>
</dbReference>
<dbReference type="GO" id="GO:0160221">
    <property type="term" value="P:Rho-activating G protein-coupled receptor signaling pathway"/>
    <property type="evidence" value="ECO:0000250"/>
    <property type="project" value="UniProtKB"/>
</dbReference>
<dbReference type="FunFam" id="2.60.220.50:FF:000014">
    <property type="entry name" value="Adhesion G-protein coupled receptor G1"/>
    <property type="match status" value="1"/>
</dbReference>
<dbReference type="FunFam" id="1.20.1070.10:FF:000117">
    <property type="entry name" value="adhesion G-protein coupled receptor G1"/>
    <property type="match status" value="1"/>
</dbReference>
<dbReference type="Gene3D" id="2.60.220.50">
    <property type="match status" value="1"/>
</dbReference>
<dbReference type="Gene3D" id="1.20.1070.10">
    <property type="entry name" value="Rhodopsin 7-helix transmembrane proteins"/>
    <property type="match status" value="1"/>
</dbReference>
<dbReference type="InterPro" id="IPR040950">
    <property type="entry name" value="ADGRG1_GAIN_A"/>
</dbReference>
<dbReference type="InterPro" id="IPR057244">
    <property type="entry name" value="GAIN_B"/>
</dbReference>
<dbReference type="InterPro" id="IPR046338">
    <property type="entry name" value="GAIN_dom_sf"/>
</dbReference>
<dbReference type="InterPro" id="IPR017981">
    <property type="entry name" value="GPCR_2-like_7TM"/>
</dbReference>
<dbReference type="InterPro" id="IPR000832">
    <property type="entry name" value="GPCR_2_secretin-like"/>
</dbReference>
<dbReference type="InterPro" id="IPR003910">
    <property type="entry name" value="GPR1/GPR3/GPR5"/>
</dbReference>
<dbReference type="InterPro" id="IPR000203">
    <property type="entry name" value="GPS"/>
</dbReference>
<dbReference type="InterPro" id="IPR040679">
    <property type="entry name" value="PLL"/>
</dbReference>
<dbReference type="PANTHER" id="PTHR12011">
    <property type="entry name" value="ADHESION G-PROTEIN COUPLED RECEPTOR"/>
    <property type="match status" value="1"/>
</dbReference>
<dbReference type="PANTHER" id="PTHR12011:SF318">
    <property type="entry name" value="ADHESION G-PROTEIN COUPLED RECEPTOR G1"/>
    <property type="match status" value="1"/>
</dbReference>
<dbReference type="Pfam" id="PF00002">
    <property type="entry name" value="7tm_2"/>
    <property type="match status" value="1"/>
</dbReference>
<dbReference type="Pfam" id="PF18619">
    <property type="entry name" value="GAIN_A"/>
    <property type="match status" value="1"/>
</dbReference>
<dbReference type="Pfam" id="PF01825">
    <property type="entry name" value="GPS"/>
    <property type="match status" value="1"/>
</dbReference>
<dbReference type="Pfam" id="PF18587">
    <property type="entry name" value="PLL"/>
    <property type="match status" value="1"/>
</dbReference>
<dbReference type="PRINTS" id="PR00249">
    <property type="entry name" value="GPCRSECRETIN"/>
</dbReference>
<dbReference type="PRINTS" id="PR01422">
    <property type="entry name" value="GPR56ORPHANR"/>
</dbReference>
<dbReference type="SMART" id="SM00303">
    <property type="entry name" value="GPS"/>
    <property type="match status" value="1"/>
</dbReference>
<dbReference type="PROSITE" id="PS50261">
    <property type="entry name" value="G_PROTEIN_RECEP_F2_4"/>
    <property type="match status" value="1"/>
</dbReference>
<dbReference type="PROSITE" id="PS50221">
    <property type="entry name" value="GAIN_B"/>
    <property type="match status" value="1"/>
</dbReference>
<comment type="function">
    <text evidence="1 2">Adhesion G-protein coupled receptor (aGPCR) for steroid hormone 17alpha-hydroxypregnenolone (17-OH), which is involved in cell adhesion and cell-cell interactions. Ligand binding causes a conformation change that triggers signaling via guanine nucleotide-binding proteins (G proteins) and modulates the activity of downstream effectors, such as RhoA pathway. ADGRG1 is coupled to G(12) and/or G(13) G proteins (GNA12 and GNA13, respectively) and mediates the activation Rho small GTPases (By similarity). Acts as a potent suppressor of ferroptosis: binding to 17-OH-binding initiates signaling that down-regulates CD36 and alleviates ferroptosis-induced liver injury. Ligand-binding also induces cell adhesion activity via association with proteins such as collagen III/COL3A1 and TGM2. Mediates cell matrix adhesion in developing neurons and hematopoietic stem cells (By similarity). Involved in cortical development, specifically in maintenance of the pial basement membrane integrity and in cortical lamination: association with COL3A1 in the developing brain inhibits neuronal migration via activation of the RhoA pathway (By similarity). Together with TGM2, acts as a regulator of myelination and myelin repair in oligodendrocyte precursor cells (By similarity). Acts as a hemostatic sensor of shear force: G protein-coupled receptor signaling is activated in response to shear force in platelets, promoting G(13) G protein signaling, and platelet shape change and aggregation in a COL3A1-dependent manner. Acts as an inhibitor of VEGFA production thereby inhibiting angiogenesis through a signaling pathway mediated by PRKCA (By similarity). Plays a role in the maintenance of hematopoietic stem cells in bone marrow niche. Plays an essential role in testis development (By similarity).</text>
</comment>
<comment type="activity regulation">
    <text evidence="2">Forms a heterodimer of 2 chains generated by proteolytic processing that remain associated through non-covalent interactions mediated by the GAIN-B domain. In the inactivated receptor, the Stachel sequence (also named stalk) is embedded in the GAIN-B domain, where it adopts a beta-strand conformation. On activation, the Stachel moves into the 7 transmembrane region and adopts a twisted hook-shaped configuration that forms contacts within the receptor, leading to coupling of a G-alpha protein, which activates signaling. The cleaved GAIN-B and N-terminal domains can then dissociate from the rest of the receptor.</text>
</comment>
<comment type="subunit">
    <text evidence="2">Heterodimer of 2 chains generated by proteolytic processing; the large extracellular N-terminal fragment (ADGRG1 NT) and the membrane-bound C-terminal fragment (ADGRG1-CT) predominantly remain associated and non-covalently linked. ADGRG1 NT self-associates in a trans-trans manner; the homophilic interaction enhances receptor signaling. Interacts with TGM2. Interacts with heparin; leading to the reduction of ADGRG1 shedding. Interacts with COL3A1. Part of a GPCR-tetraspanin complex at least consisting of ADGRG1, CD81, eventually CD9, and GNA11 in which CD81 is enhancing the association of ADGRG1 with GNA11.</text>
</comment>
<comment type="subcellular location">
    <subcellularLocation>
        <location evidence="2">Cell membrane</location>
        <topology evidence="2">Multi-pass membrane protein</topology>
    </subcellularLocation>
</comment>
<comment type="subcellular location">
    <molecule>Adhesion G-protein coupled receptor G1, N-terminal fragment</molecule>
    <subcellularLocation>
        <location evidence="2">Secreted</location>
    </subcellularLocation>
    <text evidence="2">Activation of the G protein-coupled receptor and interaction with COL3A1 leads to the release of ADGRG1 NT from the membrane.</text>
</comment>
<comment type="subcellular location">
    <molecule>Adhesion G-protein coupled receptor G1, C-terminal fragment</molecule>
    <subcellularLocation>
        <location evidence="2">Membrane raft</location>
    </subcellularLocation>
    <text evidence="2">Interaction with its ligand COL3A1 leads to the release of ADGRG1 NT from the membrane and triggers the association of ADGRG1 CT with lipid rafts.</text>
</comment>
<comment type="domain">
    <text evidence="2">The Stachel sequence (also named stalk) in the C-terminal part of the extracellular domain (ECD) functions as a tethered agonist. In the inactivated receptor, the Stachel sequence (also named stalk) is embedded in the GAIN-B domain, where it adopts a beta-strand conformation. On activation, the Stachel moves into the 7 transmembrane region and adopts a twisted hook-shaped configuration that forms contacts within the receptor, leading to coupling of a G-alpha protein, which activates signaling.</text>
</comment>
<comment type="PTM">
    <text evidence="2">Autoproteolytically cleaved into 2 fragments; the large extracellular N-terminal fragment (ADGRG1 NT) and the membrane-bound C-terminal fragment (ADGRG1 CT) predominantly remain associated and non-covalently linked. Shedding to yield the secreted ADGRG1 N-terminal fragment seems to involve metalloprotease(s).</text>
</comment>
<comment type="PTM">
    <text evidence="2">Ubiquitinated. Undergoes polyubiquitination upon activation.</text>
</comment>
<comment type="similarity">
    <text evidence="6">Belongs to the G-protein coupled receptor 2 family. LN-TM7 subfamily.</text>
</comment>
<organism>
    <name type="scientific">Pongo pygmaeus</name>
    <name type="common">Bornean orangutan</name>
    <dbReference type="NCBI Taxonomy" id="9600"/>
    <lineage>
        <taxon>Eukaryota</taxon>
        <taxon>Metazoa</taxon>
        <taxon>Chordata</taxon>
        <taxon>Craniata</taxon>
        <taxon>Vertebrata</taxon>
        <taxon>Euteleostomi</taxon>
        <taxon>Mammalia</taxon>
        <taxon>Eutheria</taxon>
        <taxon>Euarchontoglires</taxon>
        <taxon>Primates</taxon>
        <taxon>Haplorrhini</taxon>
        <taxon>Catarrhini</taxon>
        <taxon>Hominidae</taxon>
        <taxon>Pongo</taxon>
    </lineage>
</organism>
<name>AGRG1_PONPY</name>
<feature type="signal peptide" evidence="2">
    <location>
        <begin position="1"/>
        <end position="25"/>
    </location>
</feature>
<feature type="chain" id="PRO_0000012884" description="Adhesion G-protein coupled receptor G1">
    <location>
        <begin position="26"/>
        <end position="687"/>
    </location>
</feature>
<feature type="chain" id="PRO_0000423094" description="Adhesion G-protein coupled receptor G1, N-terminal fragment" evidence="2">
    <location>
        <begin position="26"/>
        <end position="382" status="uncertain"/>
    </location>
</feature>
<feature type="chain" id="PRO_0000423095" description="Adhesion G-protein coupled receptor G1, C-terminal fragment" evidence="2">
    <location>
        <begin position="383" status="uncertain"/>
        <end position="687"/>
    </location>
</feature>
<feature type="topological domain" description="Extracellular" evidence="3">
    <location>
        <begin position="26"/>
        <end position="402"/>
    </location>
</feature>
<feature type="transmembrane region" description="Helical; Name=1" evidence="3">
    <location>
        <begin position="403"/>
        <end position="423"/>
    </location>
</feature>
<feature type="topological domain" description="Cytoplasmic" evidence="3">
    <location>
        <begin position="424"/>
        <end position="442"/>
    </location>
</feature>
<feature type="transmembrane region" description="Helical; Name=2" evidence="3">
    <location>
        <begin position="443"/>
        <end position="463"/>
    </location>
</feature>
<feature type="topological domain" description="Extracellular" evidence="3">
    <location>
        <begin position="464"/>
        <end position="470"/>
    </location>
</feature>
<feature type="transmembrane region" description="Helical; Name=3" evidence="3">
    <location>
        <begin position="471"/>
        <end position="491"/>
    </location>
</feature>
<feature type="topological domain" description="Cytoplasmic" evidence="3">
    <location>
        <begin position="492"/>
        <end position="512"/>
    </location>
</feature>
<feature type="transmembrane region" description="Helical; Name=4" evidence="3">
    <location>
        <begin position="513"/>
        <end position="533"/>
    </location>
</feature>
<feature type="topological domain" description="Extracellular" evidence="3">
    <location>
        <begin position="534"/>
        <end position="570"/>
    </location>
</feature>
<feature type="transmembrane region" description="Helical; Name=5" evidence="3">
    <location>
        <begin position="571"/>
        <end position="591"/>
    </location>
</feature>
<feature type="topological domain" description="Cytoplasmic" evidence="3">
    <location>
        <begin position="592"/>
        <end position="603"/>
    </location>
</feature>
<feature type="transmembrane region" description="Helical; Name=6" evidence="3">
    <location>
        <begin position="604"/>
        <end position="624"/>
    </location>
</feature>
<feature type="topological domain" description="Extracellular" evidence="3">
    <location>
        <begin position="625"/>
        <end position="630"/>
    </location>
</feature>
<feature type="transmembrane region" description="Helical; Name=7" evidence="3">
    <location>
        <begin position="631"/>
        <end position="651"/>
    </location>
</feature>
<feature type="topological domain" description="Cytoplasmic" evidence="3">
    <location>
        <begin position="652"/>
        <end position="687"/>
    </location>
</feature>
<feature type="domain" description="GAIN-B" evidence="4">
    <location>
        <begin position="224"/>
        <end position="395"/>
    </location>
</feature>
<feature type="region of interest" description="GPS" evidence="4">
    <location>
        <begin position="346"/>
        <end position="395"/>
    </location>
</feature>
<feature type="region of interest" description="Stachel" evidence="2">
    <location>
        <begin position="384"/>
        <end position="397"/>
    </location>
</feature>
<feature type="region of interest" description="Disordered" evidence="5">
    <location>
        <begin position="664"/>
        <end position="687"/>
    </location>
</feature>
<feature type="compositionally biased region" description="Low complexity" evidence="5">
    <location>
        <begin position="678"/>
        <end position="687"/>
    </location>
</feature>
<feature type="binding site" evidence="2">
    <location>
        <begin position="26"/>
        <end position="33"/>
    </location>
    <ligand>
        <name>heparin</name>
        <dbReference type="ChEBI" id="CHEBI:28304"/>
    </ligand>
</feature>
<feature type="binding site" evidence="2">
    <location>
        <begin position="190"/>
        <end position="200"/>
    </location>
    <ligand>
        <name>heparin</name>
        <dbReference type="ChEBI" id="CHEBI:28304"/>
    </ligand>
</feature>
<feature type="site" description="Cleavage; by autolysis" evidence="4">
    <location>
        <begin position="382"/>
        <end position="383"/>
    </location>
</feature>
<feature type="glycosylation site" description="N-linked (GlcNAc...) asparagine" evidence="3">
    <location>
        <position position="39"/>
    </location>
</feature>
<feature type="glycosylation site" description="N-linked (GlcNAc...) asparagine" evidence="3">
    <location>
        <position position="148"/>
    </location>
</feature>
<feature type="glycosylation site" description="N-linked (GlcNAc...) asparagine" evidence="3">
    <location>
        <position position="171"/>
    </location>
</feature>
<feature type="glycosylation site" description="N-linked (GlcNAc...) asparagine" evidence="3">
    <location>
        <position position="234"/>
    </location>
</feature>
<feature type="glycosylation site" description="N-linked (GlcNAc...) asparagine" evidence="3">
    <location>
        <position position="303"/>
    </location>
</feature>
<feature type="glycosylation site" description="N-linked (GlcNAc...) asparagine" evidence="3">
    <location>
        <position position="324"/>
    </location>
</feature>
<feature type="glycosylation site" description="N-linked (GlcNAc...) asparagine" evidence="3">
    <location>
        <position position="341"/>
    </location>
</feature>
<feature type="disulfide bond" evidence="1">
    <location>
        <begin position="35"/>
        <end position="91"/>
    </location>
</feature>
<feature type="disulfide bond" evidence="1">
    <location>
        <begin position="121"/>
        <end position="177"/>
    </location>
</feature>
<feature type="disulfide bond" evidence="4">
    <location>
        <begin position="346"/>
        <end position="377"/>
    </location>
</feature>
<feature type="disulfide bond" evidence="4">
    <location>
        <begin position="366"/>
        <end position="379"/>
    </location>
</feature>